<proteinExistence type="evidence at protein level"/>
<protein>
    <recommendedName>
        <fullName>Sodium/potassium-transporting ATPase subunit beta-1-interacting protein 3</fullName>
        <shortName>Na(+)/K(+)-transporting ATPase subunit beta-1-interacting protein 3</shortName>
    </recommendedName>
    <alternativeName>
        <fullName>Protein FAM77D</fullName>
    </alternativeName>
</protein>
<reference key="1">
    <citation type="journal article" date="2004" name="Nat. Genet.">
        <title>Complete sequencing and characterization of 21,243 full-length human cDNAs.</title>
        <authorList>
            <person name="Ota T."/>
            <person name="Suzuki Y."/>
            <person name="Nishikawa T."/>
            <person name="Otsuki T."/>
            <person name="Sugiyama T."/>
            <person name="Irie R."/>
            <person name="Wakamatsu A."/>
            <person name="Hayashi K."/>
            <person name="Sato H."/>
            <person name="Nagai K."/>
            <person name="Kimura K."/>
            <person name="Makita H."/>
            <person name="Sekine M."/>
            <person name="Obayashi M."/>
            <person name="Nishi T."/>
            <person name="Shibahara T."/>
            <person name="Tanaka T."/>
            <person name="Ishii S."/>
            <person name="Yamamoto J."/>
            <person name="Saito K."/>
            <person name="Kawai Y."/>
            <person name="Isono Y."/>
            <person name="Nakamura Y."/>
            <person name="Nagahari K."/>
            <person name="Murakami K."/>
            <person name="Yasuda T."/>
            <person name="Iwayanagi T."/>
            <person name="Wagatsuma M."/>
            <person name="Shiratori A."/>
            <person name="Sudo H."/>
            <person name="Hosoiri T."/>
            <person name="Kaku Y."/>
            <person name="Kodaira H."/>
            <person name="Kondo H."/>
            <person name="Sugawara M."/>
            <person name="Takahashi M."/>
            <person name="Kanda K."/>
            <person name="Yokoi T."/>
            <person name="Furuya T."/>
            <person name="Kikkawa E."/>
            <person name="Omura Y."/>
            <person name="Abe K."/>
            <person name="Kamihara K."/>
            <person name="Katsuta N."/>
            <person name="Sato K."/>
            <person name="Tanikawa M."/>
            <person name="Yamazaki M."/>
            <person name="Ninomiya K."/>
            <person name="Ishibashi T."/>
            <person name="Yamashita H."/>
            <person name="Murakawa K."/>
            <person name="Fujimori K."/>
            <person name="Tanai H."/>
            <person name="Kimata M."/>
            <person name="Watanabe M."/>
            <person name="Hiraoka S."/>
            <person name="Chiba Y."/>
            <person name="Ishida S."/>
            <person name="Ono Y."/>
            <person name="Takiguchi S."/>
            <person name="Watanabe S."/>
            <person name="Yosida M."/>
            <person name="Hotuta T."/>
            <person name="Kusano J."/>
            <person name="Kanehori K."/>
            <person name="Takahashi-Fujii A."/>
            <person name="Hara H."/>
            <person name="Tanase T.-O."/>
            <person name="Nomura Y."/>
            <person name="Togiya S."/>
            <person name="Komai F."/>
            <person name="Hara R."/>
            <person name="Takeuchi K."/>
            <person name="Arita M."/>
            <person name="Imose N."/>
            <person name="Musashino K."/>
            <person name="Yuuki H."/>
            <person name="Oshima A."/>
            <person name="Sasaki N."/>
            <person name="Aotsuka S."/>
            <person name="Yoshikawa Y."/>
            <person name="Matsunawa H."/>
            <person name="Ichihara T."/>
            <person name="Shiohata N."/>
            <person name="Sano S."/>
            <person name="Moriya S."/>
            <person name="Momiyama H."/>
            <person name="Satoh N."/>
            <person name="Takami S."/>
            <person name="Terashima Y."/>
            <person name="Suzuki O."/>
            <person name="Nakagawa S."/>
            <person name="Senoh A."/>
            <person name="Mizoguchi H."/>
            <person name="Goto Y."/>
            <person name="Shimizu F."/>
            <person name="Wakebe H."/>
            <person name="Hishigaki H."/>
            <person name="Watanabe T."/>
            <person name="Sugiyama A."/>
            <person name="Takemoto M."/>
            <person name="Kawakami B."/>
            <person name="Yamazaki M."/>
            <person name="Watanabe K."/>
            <person name="Kumagai A."/>
            <person name="Itakura S."/>
            <person name="Fukuzumi Y."/>
            <person name="Fujimori Y."/>
            <person name="Komiyama M."/>
            <person name="Tashiro H."/>
            <person name="Tanigami A."/>
            <person name="Fujiwara T."/>
            <person name="Ono T."/>
            <person name="Yamada K."/>
            <person name="Fujii Y."/>
            <person name="Ozaki K."/>
            <person name="Hirao M."/>
            <person name="Ohmori Y."/>
            <person name="Kawabata A."/>
            <person name="Hikiji T."/>
            <person name="Kobatake N."/>
            <person name="Inagaki H."/>
            <person name="Ikema Y."/>
            <person name="Okamoto S."/>
            <person name="Okitani R."/>
            <person name="Kawakami T."/>
            <person name="Noguchi S."/>
            <person name="Itoh T."/>
            <person name="Shigeta K."/>
            <person name="Senba T."/>
            <person name="Matsumura K."/>
            <person name="Nakajima Y."/>
            <person name="Mizuno T."/>
            <person name="Morinaga M."/>
            <person name="Sasaki M."/>
            <person name="Togashi T."/>
            <person name="Oyama M."/>
            <person name="Hata H."/>
            <person name="Watanabe M."/>
            <person name="Komatsu T."/>
            <person name="Mizushima-Sugano J."/>
            <person name="Satoh T."/>
            <person name="Shirai Y."/>
            <person name="Takahashi Y."/>
            <person name="Nakagawa K."/>
            <person name="Okumura K."/>
            <person name="Nagase T."/>
            <person name="Nomura N."/>
            <person name="Kikuchi H."/>
            <person name="Masuho Y."/>
            <person name="Yamashita R."/>
            <person name="Nakai K."/>
            <person name="Yada T."/>
            <person name="Nakamura Y."/>
            <person name="Ohara O."/>
            <person name="Isogai T."/>
            <person name="Sugano S."/>
        </authorList>
    </citation>
    <scope>NUCLEOTIDE SEQUENCE [LARGE SCALE MRNA]</scope>
    <source>
        <tissue>Small intestine</tissue>
    </source>
</reference>
<feature type="chain" id="PRO_0000263093" description="Sodium/potassium-transporting ATPase subunit beta-1-interacting protein 3">
    <location>
        <begin position="1"/>
        <end position="197"/>
    </location>
</feature>
<feature type="transmembrane region" description="Helical" evidence="2">
    <location>
        <begin position="2"/>
        <end position="22"/>
    </location>
</feature>
<feature type="transmembrane region" description="Helical" evidence="2">
    <location>
        <begin position="35"/>
        <end position="55"/>
    </location>
</feature>
<feature type="transmembrane region" description="Helical" evidence="2">
    <location>
        <begin position="62"/>
        <end position="82"/>
    </location>
</feature>
<feature type="transmembrane region" description="Helical" evidence="2">
    <location>
        <begin position="152"/>
        <end position="172"/>
    </location>
</feature>
<feature type="sequence variant" id="VAR_029583" description="In dbSNP:rs4739003.">
    <original>V</original>
    <variation>I</variation>
    <location>
        <position position="140"/>
    </location>
</feature>
<keyword id="KW-1003">Cell membrane</keyword>
<keyword id="KW-0472">Membrane</keyword>
<keyword id="KW-1267">Proteomics identification</keyword>
<keyword id="KW-1185">Reference proteome</keyword>
<keyword id="KW-0812">Transmembrane</keyword>
<keyword id="KW-1133">Transmembrane helix</keyword>
<organism>
    <name type="scientific">Homo sapiens</name>
    <name type="common">Human</name>
    <dbReference type="NCBI Taxonomy" id="9606"/>
    <lineage>
        <taxon>Eukaryota</taxon>
        <taxon>Metazoa</taxon>
        <taxon>Chordata</taxon>
        <taxon>Craniata</taxon>
        <taxon>Vertebrata</taxon>
        <taxon>Euteleostomi</taxon>
        <taxon>Mammalia</taxon>
        <taxon>Eutheria</taxon>
        <taxon>Euarchontoglires</taxon>
        <taxon>Primates</taxon>
        <taxon>Haplorrhini</taxon>
        <taxon>Catarrhini</taxon>
        <taxon>Hominidae</taxon>
        <taxon>Homo</taxon>
    </lineage>
</organism>
<dbReference type="EMBL" id="AK096949">
    <property type="protein sequence ID" value="BAC04909.1"/>
    <property type="molecule type" value="mRNA"/>
</dbReference>
<dbReference type="SMR" id="Q8N8D7"/>
<dbReference type="BioGRID" id="130325">
    <property type="interactions" value="53"/>
</dbReference>
<dbReference type="FunCoup" id="Q8N8D7">
    <property type="interactions" value="11"/>
</dbReference>
<dbReference type="STRING" id="9606.ENSP00000429073"/>
<dbReference type="TCDB" id="8.A.118.1.4">
    <property type="family name" value="the na+k+-atpase beta-subunit interacting nkain (nkain) family"/>
</dbReference>
<dbReference type="PhosphoSitePlus" id="Q8N8D7"/>
<dbReference type="BioMuta" id="NKAIN3"/>
<dbReference type="DMDM" id="74729419"/>
<dbReference type="MassIVE" id="Q8N8D7"/>
<dbReference type="PaxDb" id="9606-ENSP00000429073"/>
<dbReference type="PeptideAtlas" id="Q8N8D7"/>
<dbReference type="Antibodypedia" id="63542">
    <property type="antibodies" value="5 antibodies from 5 providers"/>
</dbReference>
<dbReference type="DNASU" id="286183"/>
<dbReference type="Ensembl" id="ENST00000523211.5">
    <property type="protein sequence ID" value="ENSP00000429073.1"/>
    <property type="gene ID" value="ENSG00000185942.13"/>
</dbReference>
<dbReference type="UCSC" id="uc010lyq.2">
    <property type="organism name" value="human"/>
</dbReference>
<dbReference type="AGR" id="HGNC:26829"/>
<dbReference type="GeneCards" id="NKAIN3"/>
<dbReference type="HGNC" id="HGNC:26829">
    <property type="gene designation" value="NKAIN3"/>
</dbReference>
<dbReference type="HPA" id="ENSG00000185942">
    <property type="expression patterns" value="Tissue enhanced (brain)"/>
</dbReference>
<dbReference type="MIM" id="612872">
    <property type="type" value="gene"/>
</dbReference>
<dbReference type="neXtProt" id="NX_Q8N8D7"/>
<dbReference type="OpenTargets" id="ENSG00000185942"/>
<dbReference type="PharmGKB" id="PA162397582"/>
<dbReference type="VEuPathDB" id="HostDB:ENSG00000185942"/>
<dbReference type="eggNOG" id="KOG4556">
    <property type="taxonomic scope" value="Eukaryota"/>
</dbReference>
<dbReference type="GeneTree" id="ENSGT00940000161484"/>
<dbReference type="HOGENOM" id="CLU_090781_0_1_1"/>
<dbReference type="InParanoid" id="Q8N8D7"/>
<dbReference type="OrthoDB" id="10050321at2759"/>
<dbReference type="PAN-GO" id="Q8N8D7">
    <property type="GO annotations" value="1 GO annotation based on evolutionary models"/>
</dbReference>
<dbReference type="PhylomeDB" id="Q8N8D7"/>
<dbReference type="TreeFam" id="TF321348"/>
<dbReference type="PathwayCommons" id="Q8N8D7"/>
<dbReference type="SignaLink" id="Q8N8D7"/>
<dbReference type="ChiTaRS" id="NKAIN3">
    <property type="organism name" value="human"/>
</dbReference>
<dbReference type="Pharos" id="Q8N8D7">
    <property type="development level" value="Tdark"/>
</dbReference>
<dbReference type="PRO" id="PR:Q8N8D7"/>
<dbReference type="Proteomes" id="UP000005640">
    <property type="component" value="Chromosome 8"/>
</dbReference>
<dbReference type="RNAct" id="Q8N8D7">
    <property type="molecule type" value="protein"/>
</dbReference>
<dbReference type="Bgee" id="ENSG00000185942">
    <property type="expression patterns" value="Expressed in ventricular zone and 119 other cell types or tissues"/>
</dbReference>
<dbReference type="ExpressionAtlas" id="Q8N8D7">
    <property type="expression patterns" value="baseline and differential"/>
</dbReference>
<dbReference type="GO" id="GO:0005886">
    <property type="term" value="C:plasma membrane"/>
    <property type="evidence" value="ECO:0007669"/>
    <property type="project" value="UniProtKB-SubCell"/>
</dbReference>
<dbReference type="GO" id="GO:0002028">
    <property type="term" value="P:regulation of sodium ion transport"/>
    <property type="evidence" value="ECO:0000318"/>
    <property type="project" value="GO_Central"/>
</dbReference>
<dbReference type="InterPro" id="IPR008516">
    <property type="entry name" value="Na/K-Atpase_Interacting"/>
</dbReference>
<dbReference type="PANTHER" id="PTHR13084:SF2">
    <property type="entry name" value="SODIUM_POTASSIUM-TRANSPORTING ATPASE SUBUNIT BETA-1-INTERACTING PROTEIN 3"/>
    <property type="match status" value="1"/>
</dbReference>
<dbReference type="PANTHER" id="PTHR13084">
    <property type="entry name" value="T-CELL LYMPHOMA BREAKPOINT-ASSOCIATED TARGET 1-RELATED"/>
    <property type="match status" value="1"/>
</dbReference>
<dbReference type="Pfam" id="PF05640">
    <property type="entry name" value="NKAIN"/>
    <property type="match status" value="1"/>
</dbReference>
<evidence type="ECO:0000250" key="1"/>
<evidence type="ECO:0000255" key="2"/>
<evidence type="ECO:0000305" key="3"/>
<name>NKAI3_HUMAN</name>
<gene>
    <name type="primary">NKAIN3</name>
    <name type="synonym">FAM77D</name>
</gene>
<comment type="subunit">
    <text evidence="1">Interacts with ATP1B1.</text>
</comment>
<comment type="subcellular location">
    <subcellularLocation>
        <location evidence="3">Cell membrane</location>
        <topology evidence="3">Multi-pass membrane protein</topology>
    </subcellularLocation>
</comment>
<comment type="similarity">
    <text evidence="3">Belongs to the NKAIN family.</text>
</comment>
<sequence>MGCCTGRCSLICLCALQLVSALERQIFDFLGFQWAPILGNFLHIIVVILGLFGTIQYRPRYIMVYTVWTALWVTWNVFIICFYLEVGGLSKDTDLMTFNISVHRSWWREHGPGCVRRVLPPSAHGMMDDYTYVSVTGCIVDFQYLEVIHSAVQILLSLVGFVYACYVISISMEEEDTYSCDLQVCKHLFIQMLQIIE</sequence>
<accession>Q8N8D7</accession>